<accession>Q3AC01</accession>
<comment type="function">
    <text evidence="1">Catalyzes the reversible cyclization of carbamoyl aspartate to dihydroorotate.</text>
</comment>
<comment type="catalytic activity">
    <reaction evidence="1">
        <text>(S)-dihydroorotate + H2O = N-carbamoyl-L-aspartate + H(+)</text>
        <dbReference type="Rhea" id="RHEA:24296"/>
        <dbReference type="ChEBI" id="CHEBI:15377"/>
        <dbReference type="ChEBI" id="CHEBI:15378"/>
        <dbReference type="ChEBI" id="CHEBI:30864"/>
        <dbReference type="ChEBI" id="CHEBI:32814"/>
        <dbReference type="EC" id="3.5.2.3"/>
    </reaction>
</comment>
<comment type="cofactor">
    <cofactor evidence="1">
        <name>Zn(2+)</name>
        <dbReference type="ChEBI" id="CHEBI:29105"/>
    </cofactor>
    <text evidence="1">Binds 2 Zn(2+) ions per subunit.</text>
</comment>
<comment type="pathway">
    <text evidence="1">Pyrimidine metabolism; UMP biosynthesis via de novo pathway; (S)-dihydroorotate from bicarbonate: step 3/3.</text>
</comment>
<comment type="similarity">
    <text evidence="1">Belongs to the metallo-dependent hydrolases superfamily. DHOase family. Class I DHOase subfamily.</text>
</comment>
<evidence type="ECO:0000255" key="1">
    <source>
        <dbReference type="HAMAP-Rule" id="MF_00220"/>
    </source>
</evidence>
<reference key="1">
    <citation type="journal article" date="2005" name="PLoS Genet.">
        <title>Life in hot carbon monoxide: the complete genome sequence of Carboxydothermus hydrogenoformans Z-2901.</title>
        <authorList>
            <person name="Wu M."/>
            <person name="Ren Q."/>
            <person name="Durkin A.S."/>
            <person name="Daugherty S.C."/>
            <person name="Brinkac L.M."/>
            <person name="Dodson R.J."/>
            <person name="Madupu R."/>
            <person name="Sullivan S.A."/>
            <person name="Kolonay J.F."/>
            <person name="Nelson W.C."/>
            <person name="Tallon L.J."/>
            <person name="Jones K.M."/>
            <person name="Ulrich L.E."/>
            <person name="Gonzalez J.M."/>
            <person name="Zhulin I.B."/>
            <person name="Robb F.T."/>
            <person name="Eisen J.A."/>
        </authorList>
    </citation>
    <scope>NUCLEOTIDE SEQUENCE [LARGE SCALE GENOMIC DNA]</scope>
    <source>
        <strain>ATCC BAA-161 / DSM 6008 / Z-2901</strain>
    </source>
</reference>
<proteinExistence type="inferred from homology"/>
<organism>
    <name type="scientific">Carboxydothermus hydrogenoformans (strain ATCC BAA-161 / DSM 6008 / Z-2901)</name>
    <dbReference type="NCBI Taxonomy" id="246194"/>
    <lineage>
        <taxon>Bacteria</taxon>
        <taxon>Bacillati</taxon>
        <taxon>Bacillota</taxon>
        <taxon>Clostridia</taxon>
        <taxon>Thermoanaerobacterales</taxon>
        <taxon>Thermoanaerobacteraceae</taxon>
        <taxon>Carboxydothermus</taxon>
    </lineage>
</organism>
<keyword id="KW-0378">Hydrolase</keyword>
<keyword id="KW-0479">Metal-binding</keyword>
<keyword id="KW-0665">Pyrimidine biosynthesis</keyword>
<keyword id="KW-1185">Reference proteome</keyword>
<keyword id="KW-0862">Zinc</keyword>
<feature type="chain" id="PRO_1000024079" description="Dihydroorotase">
    <location>
        <begin position="1"/>
        <end position="430"/>
    </location>
</feature>
<feature type="active site" evidence="1">
    <location>
        <position position="304"/>
    </location>
</feature>
<feature type="binding site" evidence="1">
    <location>
        <position position="60"/>
    </location>
    <ligand>
        <name>Zn(2+)</name>
        <dbReference type="ChEBI" id="CHEBI:29105"/>
        <label>1</label>
    </ligand>
</feature>
<feature type="binding site" evidence="1">
    <location>
        <begin position="62"/>
        <end position="64"/>
    </location>
    <ligand>
        <name>substrate</name>
    </ligand>
</feature>
<feature type="binding site" evidence="1">
    <location>
        <position position="62"/>
    </location>
    <ligand>
        <name>Zn(2+)</name>
        <dbReference type="ChEBI" id="CHEBI:29105"/>
        <label>1</label>
    </ligand>
</feature>
<feature type="binding site" evidence="1">
    <location>
        <position position="94"/>
    </location>
    <ligand>
        <name>substrate</name>
    </ligand>
</feature>
<feature type="binding site" evidence="1">
    <location>
        <position position="151"/>
    </location>
    <ligand>
        <name>Zn(2+)</name>
        <dbReference type="ChEBI" id="CHEBI:29105"/>
        <label>1</label>
    </ligand>
</feature>
<feature type="binding site" evidence="1">
    <location>
        <position position="151"/>
    </location>
    <ligand>
        <name>Zn(2+)</name>
        <dbReference type="ChEBI" id="CHEBI:29105"/>
        <label>2</label>
    </ligand>
</feature>
<feature type="binding site" evidence="1">
    <location>
        <position position="178"/>
    </location>
    <ligand>
        <name>Zn(2+)</name>
        <dbReference type="ChEBI" id="CHEBI:29105"/>
        <label>2</label>
    </ligand>
</feature>
<feature type="binding site" evidence="1">
    <location>
        <position position="231"/>
    </location>
    <ligand>
        <name>Zn(2+)</name>
        <dbReference type="ChEBI" id="CHEBI:29105"/>
        <label>2</label>
    </ligand>
</feature>
<feature type="binding site" evidence="1">
    <location>
        <position position="277"/>
    </location>
    <ligand>
        <name>substrate</name>
    </ligand>
</feature>
<feature type="binding site" evidence="1">
    <location>
        <position position="304"/>
    </location>
    <ligand>
        <name>Zn(2+)</name>
        <dbReference type="ChEBI" id="CHEBI:29105"/>
        <label>1</label>
    </ligand>
</feature>
<feature type="binding site" evidence="1">
    <location>
        <position position="308"/>
    </location>
    <ligand>
        <name>substrate</name>
    </ligand>
</feature>
<feature type="binding site" evidence="1">
    <location>
        <begin position="322"/>
        <end position="323"/>
    </location>
    <ligand>
        <name>substrate</name>
    </ligand>
</feature>
<sequence length="430" mass="47093">MGMLIKNGNVVMVEDGKIRKMDVLIDKGIIVEISPEINRSDVEVIDIEGKFLIPGLIDMHVHFRDPGYTHKEDIHSGSNAALAGGFTGVLMMPNTDPPPDNATVIYYWKEKSKSIPLNILFSGCITKNRAGKELSKFYELKEAGAVAITDDGNWVADGAVFRHAMEYAAALDLLVITHPEEPTIANRGVINEGYWSTVLGLRGIPKAAENIAIYRDIEIAKMTGAKLHVAHLSTAEGVRLVAAAKKLGLKVTAEVTPHHLVLTDEALAGYDTNLKVNPPLREAEEQKALLKGLLEGVIDVIATDHAPHASYEKNVEFNDAPFGIEGLETAFPVLYTELVLKKKITLEKLLLKMTVNPAKILQLPKQGDIKKGNYANLTVIDPKLTLKVSEELLVGKSKNNPFLGRTLTGWPVMTVYQGIVAYQRLLKGVQ</sequence>
<protein>
    <recommendedName>
        <fullName evidence="1">Dihydroorotase</fullName>
        <shortName evidence="1">DHOase</shortName>
        <ecNumber evidence="1">3.5.2.3</ecNumber>
    </recommendedName>
</protein>
<gene>
    <name evidence="1" type="primary">pyrC</name>
    <name type="ordered locus">CHY_1501</name>
</gene>
<dbReference type="EC" id="3.5.2.3" evidence="1"/>
<dbReference type="EMBL" id="CP000141">
    <property type="protein sequence ID" value="ABB14270.1"/>
    <property type="molecule type" value="Genomic_DNA"/>
</dbReference>
<dbReference type="SMR" id="Q3AC01"/>
<dbReference type="FunCoup" id="Q3AC01">
    <property type="interactions" value="270"/>
</dbReference>
<dbReference type="STRING" id="246194.CHY_1501"/>
<dbReference type="KEGG" id="chy:CHY_1501"/>
<dbReference type="eggNOG" id="COG0044">
    <property type="taxonomic scope" value="Bacteria"/>
</dbReference>
<dbReference type="HOGENOM" id="CLU_015572_1_0_9"/>
<dbReference type="InParanoid" id="Q3AC01"/>
<dbReference type="UniPathway" id="UPA00070">
    <property type="reaction ID" value="UER00117"/>
</dbReference>
<dbReference type="Proteomes" id="UP000002706">
    <property type="component" value="Chromosome"/>
</dbReference>
<dbReference type="GO" id="GO:0005737">
    <property type="term" value="C:cytoplasm"/>
    <property type="evidence" value="ECO:0007669"/>
    <property type="project" value="TreeGrafter"/>
</dbReference>
<dbReference type="GO" id="GO:0004038">
    <property type="term" value="F:allantoinase activity"/>
    <property type="evidence" value="ECO:0007669"/>
    <property type="project" value="TreeGrafter"/>
</dbReference>
<dbReference type="GO" id="GO:0004151">
    <property type="term" value="F:dihydroorotase activity"/>
    <property type="evidence" value="ECO:0007669"/>
    <property type="project" value="UniProtKB-UniRule"/>
</dbReference>
<dbReference type="GO" id="GO:0008270">
    <property type="term" value="F:zinc ion binding"/>
    <property type="evidence" value="ECO:0007669"/>
    <property type="project" value="UniProtKB-UniRule"/>
</dbReference>
<dbReference type="GO" id="GO:0044205">
    <property type="term" value="P:'de novo' UMP biosynthetic process"/>
    <property type="evidence" value="ECO:0007669"/>
    <property type="project" value="UniProtKB-UniRule"/>
</dbReference>
<dbReference type="GO" id="GO:0006145">
    <property type="term" value="P:purine nucleobase catabolic process"/>
    <property type="evidence" value="ECO:0007669"/>
    <property type="project" value="TreeGrafter"/>
</dbReference>
<dbReference type="CDD" id="cd01317">
    <property type="entry name" value="DHOase_IIa"/>
    <property type="match status" value="1"/>
</dbReference>
<dbReference type="Gene3D" id="3.20.20.140">
    <property type="entry name" value="Metal-dependent hydrolases"/>
    <property type="match status" value="1"/>
</dbReference>
<dbReference type="Gene3D" id="2.30.40.10">
    <property type="entry name" value="Urease, subunit C, domain 1"/>
    <property type="match status" value="1"/>
</dbReference>
<dbReference type="HAMAP" id="MF_00220_B">
    <property type="entry name" value="PyrC_classI_B"/>
    <property type="match status" value="1"/>
</dbReference>
<dbReference type="InterPro" id="IPR006680">
    <property type="entry name" value="Amidohydro-rel"/>
</dbReference>
<dbReference type="InterPro" id="IPR004722">
    <property type="entry name" value="DHOase"/>
</dbReference>
<dbReference type="InterPro" id="IPR050138">
    <property type="entry name" value="DHOase/Allantoinase_Hydrolase"/>
</dbReference>
<dbReference type="InterPro" id="IPR002195">
    <property type="entry name" value="Dihydroorotase_CS"/>
</dbReference>
<dbReference type="InterPro" id="IPR011059">
    <property type="entry name" value="Metal-dep_hydrolase_composite"/>
</dbReference>
<dbReference type="InterPro" id="IPR032466">
    <property type="entry name" value="Metal_Hydrolase"/>
</dbReference>
<dbReference type="NCBIfam" id="TIGR00857">
    <property type="entry name" value="pyrC_multi"/>
    <property type="match status" value="1"/>
</dbReference>
<dbReference type="PANTHER" id="PTHR43668">
    <property type="entry name" value="ALLANTOINASE"/>
    <property type="match status" value="1"/>
</dbReference>
<dbReference type="PANTHER" id="PTHR43668:SF2">
    <property type="entry name" value="ALLANTOINASE"/>
    <property type="match status" value="1"/>
</dbReference>
<dbReference type="Pfam" id="PF01979">
    <property type="entry name" value="Amidohydro_1"/>
    <property type="match status" value="1"/>
</dbReference>
<dbReference type="SUPFAM" id="SSF51338">
    <property type="entry name" value="Composite domain of metallo-dependent hydrolases"/>
    <property type="match status" value="1"/>
</dbReference>
<dbReference type="SUPFAM" id="SSF51556">
    <property type="entry name" value="Metallo-dependent hydrolases"/>
    <property type="match status" value="1"/>
</dbReference>
<dbReference type="PROSITE" id="PS00482">
    <property type="entry name" value="DIHYDROOROTASE_1"/>
    <property type="match status" value="1"/>
</dbReference>
<dbReference type="PROSITE" id="PS00483">
    <property type="entry name" value="DIHYDROOROTASE_2"/>
    <property type="match status" value="1"/>
</dbReference>
<name>PYRC_CARHZ</name>